<comment type="function">
    <text evidence="1">Has an important function as a repair enzyme for proteins that have been inactivated by oxidation. Catalyzes the reversible oxidation-reduction of methionine sulfoxide in proteins to methionine.</text>
</comment>
<comment type="catalytic activity">
    <reaction evidence="1">
        <text>L-methionyl-[protein] + [thioredoxin]-disulfide + H2O = L-methionyl-(S)-S-oxide-[protein] + [thioredoxin]-dithiol</text>
        <dbReference type="Rhea" id="RHEA:14217"/>
        <dbReference type="Rhea" id="RHEA-COMP:10698"/>
        <dbReference type="Rhea" id="RHEA-COMP:10700"/>
        <dbReference type="Rhea" id="RHEA-COMP:12313"/>
        <dbReference type="Rhea" id="RHEA-COMP:12315"/>
        <dbReference type="ChEBI" id="CHEBI:15377"/>
        <dbReference type="ChEBI" id="CHEBI:16044"/>
        <dbReference type="ChEBI" id="CHEBI:29950"/>
        <dbReference type="ChEBI" id="CHEBI:44120"/>
        <dbReference type="ChEBI" id="CHEBI:50058"/>
        <dbReference type="EC" id="1.8.4.11"/>
    </reaction>
</comment>
<comment type="catalytic activity">
    <reaction evidence="1">
        <text>[thioredoxin]-disulfide + L-methionine + H2O = L-methionine (S)-S-oxide + [thioredoxin]-dithiol</text>
        <dbReference type="Rhea" id="RHEA:19993"/>
        <dbReference type="Rhea" id="RHEA-COMP:10698"/>
        <dbReference type="Rhea" id="RHEA-COMP:10700"/>
        <dbReference type="ChEBI" id="CHEBI:15377"/>
        <dbReference type="ChEBI" id="CHEBI:29950"/>
        <dbReference type="ChEBI" id="CHEBI:50058"/>
        <dbReference type="ChEBI" id="CHEBI:57844"/>
        <dbReference type="ChEBI" id="CHEBI:58772"/>
        <dbReference type="EC" id="1.8.4.11"/>
    </reaction>
</comment>
<comment type="similarity">
    <text evidence="1">Belongs to the MsrA Met sulfoxide reductase family.</text>
</comment>
<feature type="chain" id="PRO_0000138598" description="Peptide methionine sulfoxide reductase MsrA">
    <location>
        <begin position="1"/>
        <end position="169"/>
    </location>
</feature>
<feature type="active site" evidence="1">
    <location>
        <position position="10"/>
    </location>
</feature>
<reference key="1">
    <citation type="journal article" date="2002" name="Proc. Natl. Acad. Sci. U.S.A.">
        <title>Genome sequence of a serotype M3 strain of group A Streptococcus: phage-encoded toxins, the high-virulence phenotype, and clone emergence.</title>
        <authorList>
            <person name="Beres S.B."/>
            <person name="Sylva G.L."/>
            <person name="Barbian K.D."/>
            <person name="Lei B."/>
            <person name="Hoff J.S."/>
            <person name="Mammarella N.D."/>
            <person name="Liu M.-Y."/>
            <person name="Smoot J.C."/>
            <person name="Porcella S.F."/>
            <person name="Parkins L.D."/>
            <person name="Campbell D.S."/>
            <person name="Smith T.M."/>
            <person name="McCormick J.K."/>
            <person name="Leung D.Y.M."/>
            <person name="Schlievert P.M."/>
            <person name="Musser J.M."/>
        </authorList>
    </citation>
    <scope>NUCLEOTIDE SEQUENCE [LARGE SCALE GENOMIC DNA]</scope>
    <source>
        <strain>ATCC BAA-595 / MGAS315</strain>
    </source>
</reference>
<gene>
    <name evidence="1" type="primary">msrA.2</name>
    <name type="ordered locus">SpyM3_0329</name>
</gene>
<proteinExistence type="inferred from homology"/>
<protein>
    <recommendedName>
        <fullName evidence="1">Peptide methionine sulfoxide reductase MsrA</fullName>
        <shortName evidence="1">Protein-methionine-S-oxide reductase</shortName>
        <ecNumber evidence="1">1.8.4.11</ecNumber>
    </recommendedName>
    <alternativeName>
        <fullName evidence="1">Peptide-methionine (S)-S-oxide reductase</fullName>
        <shortName evidence="1">Peptide Met(O) reductase</shortName>
    </alternativeName>
</protein>
<accession>P0DC38</accession>
<accession>Q8K8E4</accession>
<sequence length="169" mass="19512">MERAIFAGGCFWCMVQPFEEQAGILSVRSGYTGGHLPNPSYEQVCAKTTGHTEAVEIIFDPEEISYKELVELYWVQTDPTDAFGQFEDRGDNYRPVIYYTTERQKEIAEQSKANLQASGRFDQPIVTTIEPAEPFYLAEDYHQGFYKKNPKRYAQSSAIRHQFLEENWS</sequence>
<organism>
    <name type="scientific">Streptococcus pyogenes serotype M3 (strain ATCC BAA-595 / MGAS315)</name>
    <dbReference type="NCBI Taxonomy" id="198466"/>
    <lineage>
        <taxon>Bacteria</taxon>
        <taxon>Bacillati</taxon>
        <taxon>Bacillota</taxon>
        <taxon>Bacilli</taxon>
        <taxon>Lactobacillales</taxon>
        <taxon>Streptococcaceae</taxon>
        <taxon>Streptococcus</taxon>
    </lineage>
</organism>
<dbReference type="EC" id="1.8.4.11" evidence="1"/>
<dbReference type="EMBL" id="AE014074">
    <property type="protein sequence ID" value="AAM78936.1"/>
    <property type="molecule type" value="Genomic_DNA"/>
</dbReference>
<dbReference type="SMR" id="P0DC38"/>
<dbReference type="KEGG" id="spg:SpyM3_0329"/>
<dbReference type="HOGENOM" id="CLU_031040_10_1_9"/>
<dbReference type="Proteomes" id="UP000000564">
    <property type="component" value="Chromosome"/>
</dbReference>
<dbReference type="GO" id="GO:0033744">
    <property type="term" value="F:L-methionine:thioredoxin-disulfide S-oxidoreductase activity"/>
    <property type="evidence" value="ECO:0007669"/>
    <property type="project" value="RHEA"/>
</dbReference>
<dbReference type="GO" id="GO:0008113">
    <property type="term" value="F:peptide-methionine (S)-S-oxide reductase activity"/>
    <property type="evidence" value="ECO:0007669"/>
    <property type="project" value="UniProtKB-UniRule"/>
</dbReference>
<dbReference type="GO" id="GO:0036211">
    <property type="term" value="P:protein modification process"/>
    <property type="evidence" value="ECO:0007669"/>
    <property type="project" value="UniProtKB-UniRule"/>
</dbReference>
<dbReference type="Gene3D" id="3.30.1060.10">
    <property type="entry name" value="Peptide methionine sulphoxide reductase MsrA"/>
    <property type="match status" value="1"/>
</dbReference>
<dbReference type="HAMAP" id="MF_01401">
    <property type="entry name" value="MsrA"/>
    <property type="match status" value="1"/>
</dbReference>
<dbReference type="InterPro" id="IPR002569">
    <property type="entry name" value="Met_Sox_Rdtase_MsrA_dom"/>
</dbReference>
<dbReference type="InterPro" id="IPR036509">
    <property type="entry name" value="Met_Sox_Rdtase_MsrA_sf"/>
</dbReference>
<dbReference type="NCBIfam" id="TIGR00401">
    <property type="entry name" value="msrA"/>
    <property type="match status" value="1"/>
</dbReference>
<dbReference type="PANTHER" id="PTHR43774">
    <property type="entry name" value="PEPTIDE METHIONINE SULFOXIDE REDUCTASE"/>
    <property type="match status" value="1"/>
</dbReference>
<dbReference type="PANTHER" id="PTHR43774:SF1">
    <property type="entry name" value="PEPTIDE METHIONINE SULFOXIDE REDUCTASE MSRA 2"/>
    <property type="match status" value="1"/>
</dbReference>
<dbReference type="Pfam" id="PF01625">
    <property type="entry name" value="PMSR"/>
    <property type="match status" value="1"/>
</dbReference>
<dbReference type="SUPFAM" id="SSF55068">
    <property type="entry name" value="Peptide methionine sulfoxide reductase"/>
    <property type="match status" value="1"/>
</dbReference>
<keyword id="KW-0560">Oxidoreductase</keyword>
<evidence type="ECO:0000255" key="1">
    <source>
        <dbReference type="HAMAP-Rule" id="MF_01401"/>
    </source>
</evidence>
<name>MSRA_STRP3</name>